<organism>
    <name type="scientific">Escherichia coli O6:H1 (strain CFT073 / ATCC 700928 / UPEC)</name>
    <dbReference type="NCBI Taxonomy" id="199310"/>
    <lineage>
        <taxon>Bacteria</taxon>
        <taxon>Pseudomonadati</taxon>
        <taxon>Pseudomonadota</taxon>
        <taxon>Gammaproteobacteria</taxon>
        <taxon>Enterobacterales</taxon>
        <taxon>Enterobacteriaceae</taxon>
        <taxon>Escherichia</taxon>
    </lineage>
</organism>
<accession>P0A8Z4</accession>
<accession>P08999</accession>
<gene>
    <name type="primary">ybgC</name>
    <name type="ordered locus">c0815</name>
</gene>
<name>YBGC_ECOL6</name>
<evidence type="ECO:0000250" key="1"/>
<evidence type="ECO:0000255" key="2">
    <source>
        <dbReference type="PROSITE-ProRule" id="PRU10041"/>
    </source>
</evidence>
<evidence type="ECO:0000305" key="3"/>
<proteinExistence type="inferred from homology"/>
<reference key="1">
    <citation type="journal article" date="2002" name="Proc. Natl. Acad. Sci. U.S.A.">
        <title>Extensive mosaic structure revealed by the complete genome sequence of uropathogenic Escherichia coli.</title>
        <authorList>
            <person name="Welch R.A."/>
            <person name="Burland V."/>
            <person name="Plunkett G. III"/>
            <person name="Redford P."/>
            <person name="Roesch P."/>
            <person name="Rasko D."/>
            <person name="Buckles E.L."/>
            <person name="Liou S.-R."/>
            <person name="Boutin A."/>
            <person name="Hackett J."/>
            <person name="Stroud D."/>
            <person name="Mayhew G.F."/>
            <person name="Rose D.J."/>
            <person name="Zhou S."/>
            <person name="Schwartz D.C."/>
            <person name="Perna N.T."/>
            <person name="Mobley H.L.T."/>
            <person name="Donnenberg M.S."/>
            <person name="Blattner F.R."/>
        </authorList>
    </citation>
    <scope>NUCLEOTIDE SEQUENCE [LARGE SCALE GENOMIC DNA]</scope>
    <source>
        <strain>CFT073 / ATCC 700928 / UPEC</strain>
    </source>
</reference>
<keyword id="KW-0997">Cell inner membrane</keyword>
<keyword id="KW-1003">Cell membrane</keyword>
<keyword id="KW-0378">Hydrolase</keyword>
<keyword id="KW-0443">Lipid metabolism</keyword>
<keyword id="KW-0472">Membrane</keyword>
<keyword id="KW-1185">Reference proteome</keyword>
<dbReference type="EC" id="3.1.2.-"/>
<dbReference type="EMBL" id="AE014075">
    <property type="protein sequence ID" value="AAN79288.1"/>
    <property type="molecule type" value="Genomic_DNA"/>
</dbReference>
<dbReference type="RefSeq" id="WP_001098384.1">
    <property type="nucleotide sequence ID" value="NZ_CP051263.1"/>
</dbReference>
<dbReference type="SMR" id="P0A8Z4"/>
<dbReference type="STRING" id="199310.c0815"/>
<dbReference type="GeneID" id="93776748"/>
<dbReference type="KEGG" id="ecc:c0815"/>
<dbReference type="eggNOG" id="COG0824">
    <property type="taxonomic scope" value="Bacteria"/>
</dbReference>
<dbReference type="HOGENOM" id="CLU_101141_7_2_6"/>
<dbReference type="BioCyc" id="ECOL199310:C0815-MONOMER"/>
<dbReference type="Proteomes" id="UP000001410">
    <property type="component" value="Chromosome"/>
</dbReference>
<dbReference type="GO" id="GO:0005886">
    <property type="term" value="C:plasma membrane"/>
    <property type="evidence" value="ECO:0007669"/>
    <property type="project" value="UniProtKB-SubCell"/>
</dbReference>
<dbReference type="GO" id="GO:0047617">
    <property type="term" value="F:fatty acyl-CoA hydrolase activity"/>
    <property type="evidence" value="ECO:0007669"/>
    <property type="project" value="TreeGrafter"/>
</dbReference>
<dbReference type="GO" id="GO:0006629">
    <property type="term" value="P:lipid metabolic process"/>
    <property type="evidence" value="ECO:0007669"/>
    <property type="project" value="UniProtKB-KW"/>
</dbReference>
<dbReference type="CDD" id="cd00586">
    <property type="entry name" value="4HBT"/>
    <property type="match status" value="1"/>
</dbReference>
<dbReference type="FunFam" id="3.10.129.10:FF:000004">
    <property type="entry name" value="Tol-pal system-associated acyl-CoA thioesterase"/>
    <property type="match status" value="1"/>
</dbReference>
<dbReference type="Gene3D" id="3.10.129.10">
    <property type="entry name" value="Hotdog Thioesterase"/>
    <property type="match status" value="1"/>
</dbReference>
<dbReference type="InterPro" id="IPR050563">
    <property type="entry name" value="4-hydroxybenzoyl-CoA_TE"/>
</dbReference>
<dbReference type="InterPro" id="IPR008272">
    <property type="entry name" value="HB-CoA_thioesterase_AS"/>
</dbReference>
<dbReference type="InterPro" id="IPR029069">
    <property type="entry name" value="HotDog_dom_sf"/>
</dbReference>
<dbReference type="InterPro" id="IPR006683">
    <property type="entry name" value="Thioestr_dom"/>
</dbReference>
<dbReference type="InterPro" id="IPR014166">
    <property type="entry name" value="Tol-Pal_acyl-CoA_thioesterase"/>
</dbReference>
<dbReference type="InterPro" id="IPR006684">
    <property type="entry name" value="YbgC/YbaW"/>
</dbReference>
<dbReference type="NCBIfam" id="NF008065">
    <property type="entry name" value="PRK10800.1"/>
    <property type="match status" value="1"/>
</dbReference>
<dbReference type="NCBIfam" id="TIGR02799">
    <property type="entry name" value="thio_ybgC"/>
    <property type="match status" value="1"/>
</dbReference>
<dbReference type="NCBIfam" id="TIGR00051">
    <property type="entry name" value="YbgC/FadM family acyl-CoA thioesterase"/>
    <property type="match status" value="1"/>
</dbReference>
<dbReference type="PANTHER" id="PTHR31793">
    <property type="entry name" value="4-HYDROXYBENZOYL-COA THIOESTERASE FAMILY MEMBER"/>
    <property type="match status" value="1"/>
</dbReference>
<dbReference type="PANTHER" id="PTHR31793:SF37">
    <property type="entry name" value="ACYL-COA THIOESTER HYDROLASE YBGC"/>
    <property type="match status" value="1"/>
</dbReference>
<dbReference type="Pfam" id="PF03061">
    <property type="entry name" value="4HBT"/>
    <property type="match status" value="1"/>
</dbReference>
<dbReference type="PIRSF" id="PIRSF003230">
    <property type="entry name" value="YbgC"/>
    <property type="match status" value="1"/>
</dbReference>
<dbReference type="SUPFAM" id="SSF54637">
    <property type="entry name" value="Thioesterase/thiol ester dehydrase-isomerase"/>
    <property type="match status" value="1"/>
</dbReference>
<dbReference type="PROSITE" id="PS01328">
    <property type="entry name" value="4HBCOA_THIOESTERASE"/>
    <property type="match status" value="1"/>
</dbReference>
<feature type="chain" id="PRO_0000087764" description="Acyl-CoA thioester hydrolase YbgC">
    <location>
        <begin position="1"/>
        <end position="134"/>
    </location>
</feature>
<feature type="active site" evidence="2">
    <location>
        <position position="18"/>
    </location>
</feature>
<comment type="function">
    <text evidence="1">Thioesterase that appears to be involved in phospholipid metabolism. Some specific acyl-ACPs could be physiological substrates. Displays acyl-CoA thioesterase activity on malonyl-CoA in vitro, catalyzing the hydrolysis of the thioester bond (By similarity).</text>
</comment>
<comment type="subcellular location">
    <subcellularLocation>
        <location evidence="1">Cell inner membrane</location>
        <topology evidence="1">Peripheral membrane protein</topology>
        <orientation evidence="1">Cytoplasmic side</orientation>
    </subcellularLocation>
</comment>
<comment type="similarity">
    <text evidence="3">Belongs to the 4-hydroxybenzoyl-CoA thioesterase family.</text>
</comment>
<protein>
    <recommendedName>
        <fullName>Acyl-CoA thioester hydrolase YbgC</fullName>
        <shortName>Acyl-CoA thioesterase</shortName>
        <ecNumber>3.1.2.-</ecNumber>
    </recommendedName>
</protein>
<sequence length="134" mass="15562">MNTTLFRWPVRVYYEDTDAGGVVYHASYVAFYERARTEMLRHHHFSQQALMAERVAFVVRKMTVEYYAPARLDDMLEIQTEITSMRGTSLVFTQRIVNAENTLLNEAEVLVVCVDPLKMKPRALPKSIVAEFKQ</sequence>